<organism>
    <name type="scientific">Mus musculus</name>
    <name type="common">Mouse</name>
    <dbReference type="NCBI Taxonomy" id="10090"/>
    <lineage>
        <taxon>Eukaryota</taxon>
        <taxon>Metazoa</taxon>
        <taxon>Chordata</taxon>
        <taxon>Craniata</taxon>
        <taxon>Vertebrata</taxon>
        <taxon>Euteleostomi</taxon>
        <taxon>Mammalia</taxon>
        <taxon>Eutheria</taxon>
        <taxon>Euarchontoglires</taxon>
        <taxon>Glires</taxon>
        <taxon>Rodentia</taxon>
        <taxon>Myomorpha</taxon>
        <taxon>Muroidea</taxon>
        <taxon>Muridae</taxon>
        <taxon>Murinae</taxon>
        <taxon>Mus</taxon>
        <taxon>Mus</taxon>
    </lineage>
</organism>
<feature type="chain" id="PRO_0000089325" description="Protein CASC3">
    <location>
        <begin position="1"/>
        <end position="698"/>
    </location>
</feature>
<feature type="region of interest" description="Disordered" evidence="5">
    <location>
        <begin position="1"/>
        <end position="229"/>
    </location>
</feature>
<feature type="region of interest" description="Necessary for RNA-binding, interaction with MAGOH and localization in nucleus speckles" evidence="1">
    <location>
        <begin position="134"/>
        <end position="280"/>
    </location>
</feature>
<feature type="region of interest" description="Sufficient to form the EJC" evidence="1">
    <location>
        <begin position="134"/>
        <end position="280"/>
    </location>
</feature>
<feature type="region of interest" description="Disordered" evidence="5">
    <location>
        <begin position="241"/>
        <end position="457"/>
    </location>
</feature>
<feature type="region of interest" description="Necessary for localization in cytoplasmic stress granules" evidence="1">
    <location>
        <begin position="374"/>
        <end position="698"/>
    </location>
</feature>
<feature type="region of interest" description="Disordered" evidence="5">
    <location>
        <begin position="488"/>
        <end position="533"/>
    </location>
</feature>
<feature type="region of interest" description="Disordered" evidence="5">
    <location>
        <begin position="575"/>
        <end position="614"/>
    </location>
</feature>
<feature type="region of interest" description="Disordered" evidence="5">
    <location>
        <begin position="629"/>
        <end position="698"/>
    </location>
</feature>
<feature type="coiled-coil region" evidence="4">
    <location>
        <begin position="98"/>
        <end position="127"/>
    </location>
</feature>
<feature type="short sequence motif" description="Nuclear localization signal 1" evidence="4">
    <location>
        <begin position="201"/>
        <end position="207"/>
    </location>
</feature>
<feature type="short sequence motif" description="Nuclear localization signal 2" evidence="4">
    <location>
        <begin position="251"/>
        <end position="259"/>
    </location>
</feature>
<feature type="short sequence motif" description="Nuclear export signal">
    <location>
        <begin position="457"/>
        <end position="466"/>
    </location>
</feature>
<feature type="compositionally biased region" description="Low complexity" evidence="5">
    <location>
        <begin position="19"/>
        <end position="28"/>
    </location>
</feature>
<feature type="compositionally biased region" description="Gly residues" evidence="5">
    <location>
        <begin position="29"/>
        <end position="45"/>
    </location>
</feature>
<feature type="compositionally biased region" description="Acidic residues" evidence="5">
    <location>
        <begin position="73"/>
        <end position="83"/>
    </location>
</feature>
<feature type="compositionally biased region" description="Acidic residues" evidence="5">
    <location>
        <begin position="92"/>
        <end position="106"/>
    </location>
</feature>
<feature type="compositionally biased region" description="Basic and acidic residues" evidence="5">
    <location>
        <begin position="107"/>
        <end position="117"/>
    </location>
</feature>
<feature type="compositionally biased region" description="Basic and acidic residues" evidence="5">
    <location>
        <begin position="124"/>
        <end position="135"/>
    </location>
</feature>
<feature type="compositionally biased region" description="Polar residues" evidence="5">
    <location>
        <begin position="137"/>
        <end position="154"/>
    </location>
</feature>
<feature type="compositionally biased region" description="Basic and acidic residues" evidence="5">
    <location>
        <begin position="155"/>
        <end position="175"/>
    </location>
</feature>
<feature type="compositionally biased region" description="Basic and acidic residues" evidence="5">
    <location>
        <begin position="208"/>
        <end position="229"/>
    </location>
</feature>
<feature type="compositionally biased region" description="Basic and acidic residues" evidence="5">
    <location>
        <begin position="242"/>
        <end position="252"/>
    </location>
</feature>
<feature type="compositionally biased region" description="Polar residues" evidence="5">
    <location>
        <begin position="294"/>
        <end position="312"/>
    </location>
</feature>
<feature type="compositionally biased region" description="Basic and acidic residues" evidence="5">
    <location>
        <begin position="338"/>
        <end position="352"/>
    </location>
</feature>
<feature type="compositionally biased region" description="Basic and acidic residues" evidence="5">
    <location>
        <begin position="410"/>
        <end position="419"/>
    </location>
</feature>
<feature type="compositionally biased region" description="Pro residues" evidence="5">
    <location>
        <begin position="585"/>
        <end position="609"/>
    </location>
</feature>
<feature type="compositionally biased region" description="Pro residues" evidence="5">
    <location>
        <begin position="636"/>
        <end position="645"/>
    </location>
</feature>
<feature type="compositionally biased region" description="Pro residues" evidence="5">
    <location>
        <begin position="672"/>
        <end position="691"/>
    </location>
</feature>
<feature type="modified residue" description="Phosphoserine" evidence="11">
    <location>
        <position position="34"/>
    </location>
</feature>
<feature type="modified residue" description="Phosphoserine" evidence="2">
    <location>
        <position position="115"/>
    </location>
</feature>
<feature type="modified residue" description="Phosphoserine" evidence="10 11">
    <location>
        <position position="145"/>
    </location>
</feature>
<feature type="modified residue" description="Phosphoserine" evidence="2">
    <location>
        <position position="262"/>
    </location>
</feature>
<feature type="modified residue" description="Phosphoserine" evidence="11">
    <location>
        <position position="263"/>
    </location>
</feature>
<feature type="modified residue" description="Phosphothreonine" evidence="2">
    <location>
        <position position="354"/>
    </location>
</feature>
<feature type="modified residue" description="Phosphoserine" evidence="2">
    <location>
        <position position="360"/>
    </location>
</feature>
<feature type="modified residue" description="Phosphoserine" evidence="2">
    <location>
        <position position="370"/>
    </location>
</feature>
<feature type="modified residue" description="Phosphoserine" evidence="2">
    <location>
        <position position="472"/>
    </location>
</feature>
<feature type="mutagenesis site" description="Accumulation in the nucleus." evidence="6">
    <original>L</original>
    <variation>A</variation>
    <location>
        <position position="464"/>
    </location>
</feature>
<feature type="sequence conflict" description="In Ref. 3; BAE24081." evidence="8" ref="3">
    <original>N</original>
    <variation>D</variation>
    <location>
        <position position="297"/>
    </location>
</feature>
<feature type="sequence conflict" description="In Ref. 6; AAH34533." evidence="8" ref="6">
    <original>S</original>
    <variation>G</variation>
    <location>
        <position position="474"/>
    </location>
</feature>
<feature type="sequence conflict" description="In Ref. 3; BAE24081." evidence="8" ref="3">
    <original>L</original>
    <variation>V</variation>
    <location>
        <position position="589"/>
    </location>
</feature>
<feature type="sequence conflict" description="In Ref. 2; CAC27775 and 6; AAH60672." evidence="8" ref="2 6">
    <location>
        <position position="638"/>
    </location>
</feature>
<accession>Q8K3W3</accession>
<accession>A3KFP7</accession>
<accession>Q3UT99</accession>
<accession>Q8K219</accession>
<accession>Q99NF0</accession>
<proteinExistence type="evidence at protein level"/>
<gene>
    <name type="primary">Casc3</name>
    <name type="synonym">Mln51</name>
</gene>
<protein>
    <recommendedName>
        <fullName>Protein CASC3</fullName>
    </recommendedName>
    <alternativeName>
        <fullName>Cancer susceptibility candidate gene 3 protein homolog</fullName>
    </alternativeName>
    <alternativeName>
        <fullName>Metastatic lymph node gene 51 protein homolog</fullName>
        <shortName>MLN 51 homolog</shortName>
    </alternativeName>
    <alternativeName>
        <fullName evidence="7">Protein barentsz</fullName>
        <shortName evidence="7">Btz</shortName>
        <shortName evidence="7">mBtz</shortName>
    </alternativeName>
</protein>
<evidence type="ECO:0000250" key="1"/>
<evidence type="ECO:0000250" key="2">
    <source>
        <dbReference type="UniProtKB" id="O15234"/>
    </source>
</evidence>
<evidence type="ECO:0000250" key="3">
    <source>
        <dbReference type="UniProtKB" id="Q8K3X0"/>
    </source>
</evidence>
<evidence type="ECO:0000255" key="4"/>
<evidence type="ECO:0000256" key="5">
    <source>
        <dbReference type="SAM" id="MobiDB-lite"/>
    </source>
</evidence>
<evidence type="ECO:0000269" key="6">
    <source>
    </source>
</evidence>
<evidence type="ECO:0000303" key="7">
    <source>
    </source>
</evidence>
<evidence type="ECO:0000305" key="8"/>
<evidence type="ECO:0000305" key="9">
    <source>
    </source>
</evidence>
<evidence type="ECO:0007744" key="10">
    <source>
    </source>
</evidence>
<evidence type="ECO:0007744" key="11">
    <source>
    </source>
</evidence>
<reference key="1">
    <citation type="journal article" date="2002" name="Oncogene">
        <title>Metastatic lymph node 51, a novel nucleo-cytoplasmic protein overexpressed in breast cancer.</title>
        <authorList>
            <person name="Degot S.F."/>
            <person name="Regnier C.H."/>
            <person name="Wendling C."/>
            <person name="Chenard M.-P."/>
            <person name="Rio M.-C."/>
            <person name="Tomasetto C.L."/>
        </authorList>
    </citation>
    <scope>NUCLEOTIDE SEQUENCE [MRNA]</scope>
</reference>
<reference key="2">
    <citation type="journal article" date="2003" name="J. Neurosci.">
        <title>Barentsz, a new component of the Staufen-containing ribonucleoprotein particles in mammalian cells, interacts with Staufen in an RNA-dependent manner.</title>
        <authorList>
            <person name="Macchi P."/>
            <person name="Kroening S."/>
            <person name="Palacios I.M."/>
            <person name="Baldassa S."/>
            <person name="Grunewald B."/>
            <person name="Ambrosino C."/>
            <person name="Goetze B."/>
            <person name="Lupas A."/>
            <person name="St Johnston D."/>
            <person name="Kiebler M."/>
        </authorList>
    </citation>
    <scope>NUCLEOTIDE SEQUENCE [MRNA]</scope>
    <scope>INTERACTION WITH STAU1</scope>
    <scope>SUBCELLULAR LOCATION</scope>
    <scope>TISSUE SPECIFICITY</scope>
    <scope>MUTAGENESIS OF LEU-464</scope>
    <source>
        <strain>BALB/cJ</strain>
    </source>
</reference>
<reference key="3">
    <citation type="journal article" date="2005" name="Science">
        <title>The transcriptional landscape of the mammalian genome.</title>
        <authorList>
            <person name="Carninci P."/>
            <person name="Kasukawa T."/>
            <person name="Katayama S."/>
            <person name="Gough J."/>
            <person name="Frith M.C."/>
            <person name="Maeda N."/>
            <person name="Oyama R."/>
            <person name="Ravasi T."/>
            <person name="Lenhard B."/>
            <person name="Wells C."/>
            <person name="Kodzius R."/>
            <person name="Shimokawa K."/>
            <person name="Bajic V.B."/>
            <person name="Brenner S.E."/>
            <person name="Batalov S."/>
            <person name="Forrest A.R."/>
            <person name="Zavolan M."/>
            <person name="Davis M.J."/>
            <person name="Wilming L.G."/>
            <person name="Aidinis V."/>
            <person name="Allen J.E."/>
            <person name="Ambesi-Impiombato A."/>
            <person name="Apweiler R."/>
            <person name="Aturaliya R.N."/>
            <person name="Bailey T.L."/>
            <person name="Bansal M."/>
            <person name="Baxter L."/>
            <person name="Beisel K.W."/>
            <person name="Bersano T."/>
            <person name="Bono H."/>
            <person name="Chalk A.M."/>
            <person name="Chiu K.P."/>
            <person name="Choudhary V."/>
            <person name="Christoffels A."/>
            <person name="Clutterbuck D.R."/>
            <person name="Crowe M.L."/>
            <person name="Dalla E."/>
            <person name="Dalrymple B.P."/>
            <person name="de Bono B."/>
            <person name="Della Gatta G."/>
            <person name="di Bernardo D."/>
            <person name="Down T."/>
            <person name="Engstrom P."/>
            <person name="Fagiolini M."/>
            <person name="Faulkner G."/>
            <person name="Fletcher C.F."/>
            <person name="Fukushima T."/>
            <person name="Furuno M."/>
            <person name="Futaki S."/>
            <person name="Gariboldi M."/>
            <person name="Georgii-Hemming P."/>
            <person name="Gingeras T.R."/>
            <person name="Gojobori T."/>
            <person name="Green R.E."/>
            <person name="Gustincich S."/>
            <person name="Harbers M."/>
            <person name="Hayashi Y."/>
            <person name="Hensch T.K."/>
            <person name="Hirokawa N."/>
            <person name="Hill D."/>
            <person name="Huminiecki L."/>
            <person name="Iacono M."/>
            <person name="Ikeo K."/>
            <person name="Iwama A."/>
            <person name="Ishikawa T."/>
            <person name="Jakt M."/>
            <person name="Kanapin A."/>
            <person name="Katoh M."/>
            <person name="Kawasawa Y."/>
            <person name="Kelso J."/>
            <person name="Kitamura H."/>
            <person name="Kitano H."/>
            <person name="Kollias G."/>
            <person name="Krishnan S.P."/>
            <person name="Kruger A."/>
            <person name="Kummerfeld S.K."/>
            <person name="Kurochkin I.V."/>
            <person name="Lareau L.F."/>
            <person name="Lazarevic D."/>
            <person name="Lipovich L."/>
            <person name="Liu J."/>
            <person name="Liuni S."/>
            <person name="McWilliam S."/>
            <person name="Madan Babu M."/>
            <person name="Madera M."/>
            <person name="Marchionni L."/>
            <person name="Matsuda H."/>
            <person name="Matsuzawa S."/>
            <person name="Miki H."/>
            <person name="Mignone F."/>
            <person name="Miyake S."/>
            <person name="Morris K."/>
            <person name="Mottagui-Tabar S."/>
            <person name="Mulder N."/>
            <person name="Nakano N."/>
            <person name="Nakauchi H."/>
            <person name="Ng P."/>
            <person name="Nilsson R."/>
            <person name="Nishiguchi S."/>
            <person name="Nishikawa S."/>
            <person name="Nori F."/>
            <person name="Ohara O."/>
            <person name="Okazaki Y."/>
            <person name="Orlando V."/>
            <person name="Pang K.C."/>
            <person name="Pavan W.J."/>
            <person name="Pavesi G."/>
            <person name="Pesole G."/>
            <person name="Petrovsky N."/>
            <person name="Piazza S."/>
            <person name="Reed J."/>
            <person name="Reid J.F."/>
            <person name="Ring B.Z."/>
            <person name="Ringwald M."/>
            <person name="Rost B."/>
            <person name="Ruan Y."/>
            <person name="Salzberg S.L."/>
            <person name="Sandelin A."/>
            <person name="Schneider C."/>
            <person name="Schoenbach C."/>
            <person name="Sekiguchi K."/>
            <person name="Semple C.A."/>
            <person name="Seno S."/>
            <person name="Sessa L."/>
            <person name="Sheng Y."/>
            <person name="Shibata Y."/>
            <person name="Shimada H."/>
            <person name="Shimada K."/>
            <person name="Silva D."/>
            <person name="Sinclair B."/>
            <person name="Sperling S."/>
            <person name="Stupka E."/>
            <person name="Sugiura K."/>
            <person name="Sultana R."/>
            <person name="Takenaka Y."/>
            <person name="Taki K."/>
            <person name="Tammoja K."/>
            <person name="Tan S.L."/>
            <person name="Tang S."/>
            <person name="Taylor M.S."/>
            <person name="Tegner J."/>
            <person name="Teichmann S.A."/>
            <person name="Ueda H.R."/>
            <person name="van Nimwegen E."/>
            <person name="Verardo R."/>
            <person name="Wei C.L."/>
            <person name="Yagi K."/>
            <person name="Yamanishi H."/>
            <person name="Zabarovsky E."/>
            <person name="Zhu S."/>
            <person name="Zimmer A."/>
            <person name="Hide W."/>
            <person name="Bult C."/>
            <person name="Grimmond S.M."/>
            <person name="Teasdale R.D."/>
            <person name="Liu E.T."/>
            <person name="Brusic V."/>
            <person name="Quackenbush J."/>
            <person name="Wahlestedt C."/>
            <person name="Mattick J.S."/>
            <person name="Hume D.A."/>
            <person name="Kai C."/>
            <person name="Sasaki D."/>
            <person name="Tomaru Y."/>
            <person name="Fukuda S."/>
            <person name="Kanamori-Katayama M."/>
            <person name="Suzuki M."/>
            <person name="Aoki J."/>
            <person name="Arakawa T."/>
            <person name="Iida J."/>
            <person name="Imamura K."/>
            <person name="Itoh M."/>
            <person name="Kato T."/>
            <person name="Kawaji H."/>
            <person name="Kawagashira N."/>
            <person name="Kawashima T."/>
            <person name="Kojima M."/>
            <person name="Kondo S."/>
            <person name="Konno H."/>
            <person name="Nakano K."/>
            <person name="Ninomiya N."/>
            <person name="Nishio T."/>
            <person name="Okada M."/>
            <person name="Plessy C."/>
            <person name="Shibata K."/>
            <person name="Shiraki T."/>
            <person name="Suzuki S."/>
            <person name="Tagami M."/>
            <person name="Waki K."/>
            <person name="Watahiki A."/>
            <person name="Okamura-Oho Y."/>
            <person name="Suzuki H."/>
            <person name="Kawai J."/>
            <person name="Hayashizaki Y."/>
        </authorList>
    </citation>
    <scope>NUCLEOTIDE SEQUENCE [LARGE SCALE MRNA]</scope>
    <source>
        <strain>C57BL/6J</strain>
        <tissue>Egg</tissue>
    </source>
</reference>
<reference key="4">
    <citation type="journal article" date="2009" name="PLoS Biol.">
        <title>Lineage-specific biology revealed by a finished genome assembly of the mouse.</title>
        <authorList>
            <person name="Church D.M."/>
            <person name="Goodstadt L."/>
            <person name="Hillier L.W."/>
            <person name="Zody M.C."/>
            <person name="Goldstein S."/>
            <person name="She X."/>
            <person name="Bult C.J."/>
            <person name="Agarwala R."/>
            <person name="Cherry J.L."/>
            <person name="DiCuccio M."/>
            <person name="Hlavina W."/>
            <person name="Kapustin Y."/>
            <person name="Meric P."/>
            <person name="Maglott D."/>
            <person name="Birtle Z."/>
            <person name="Marques A.C."/>
            <person name="Graves T."/>
            <person name="Zhou S."/>
            <person name="Teague B."/>
            <person name="Potamousis K."/>
            <person name="Churas C."/>
            <person name="Place M."/>
            <person name="Herschleb J."/>
            <person name="Runnheim R."/>
            <person name="Forrest D."/>
            <person name="Amos-Landgraf J."/>
            <person name="Schwartz D.C."/>
            <person name="Cheng Z."/>
            <person name="Lindblad-Toh K."/>
            <person name="Eichler E.E."/>
            <person name="Ponting C.P."/>
        </authorList>
    </citation>
    <scope>NUCLEOTIDE SEQUENCE [LARGE SCALE GENOMIC DNA]</scope>
    <source>
        <strain>C57BL/6J</strain>
    </source>
</reference>
<reference key="5">
    <citation type="submission" date="2005-07" db="EMBL/GenBank/DDBJ databases">
        <authorList>
            <person name="Mural R.J."/>
            <person name="Adams M.D."/>
            <person name="Myers E.W."/>
            <person name="Smith H.O."/>
            <person name="Venter J.C."/>
        </authorList>
    </citation>
    <scope>NUCLEOTIDE SEQUENCE [LARGE SCALE GENOMIC DNA]</scope>
</reference>
<reference key="6">
    <citation type="journal article" date="2004" name="Genome Res.">
        <title>The status, quality, and expansion of the NIH full-length cDNA project: the Mammalian Gene Collection (MGC).</title>
        <authorList>
            <consortium name="The MGC Project Team"/>
        </authorList>
    </citation>
    <scope>NUCLEOTIDE SEQUENCE [LARGE SCALE MRNA] OF 40-697</scope>
    <source>
        <strain>Czech II</strain>
        <strain>FVB/N</strain>
        <tissue>Brain</tissue>
        <tissue>Kidney</tissue>
        <tissue>Mammary tumor</tissue>
    </source>
</reference>
<reference key="7">
    <citation type="journal article" date="2007" name="Proc. Natl. Acad. Sci. U.S.A.">
        <title>Large-scale phosphorylation analysis of mouse liver.</title>
        <authorList>
            <person name="Villen J."/>
            <person name="Beausoleil S.A."/>
            <person name="Gerber S.A."/>
            <person name="Gygi S.P."/>
        </authorList>
    </citation>
    <scope>IDENTIFICATION BY MASS SPECTROMETRY [LARGE SCALE ANALYSIS]</scope>
    <source>
        <tissue>Liver</tissue>
    </source>
</reference>
<reference key="8">
    <citation type="journal article" date="2009" name="Mol. Cell. Proteomics">
        <title>Large scale localization of protein phosphorylation by use of electron capture dissociation mass spectrometry.</title>
        <authorList>
            <person name="Sweet S.M."/>
            <person name="Bailey C.M."/>
            <person name="Cunningham D.L."/>
            <person name="Heath J.K."/>
            <person name="Cooper H.J."/>
        </authorList>
    </citation>
    <scope>PHOSPHORYLATION [LARGE SCALE ANALYSIS] AT SER-145</scope>
    <scope>IDENTIFICATION BY MASS SPECTROMETRY [LARGE SCALE ANALYSIS]</scope>
    <source>
        <tissue>Embryonic fibroblast</tissue>
    </source>
</reference>
<reference key="9">
    <citation type="journal article" date="2010" name="Cell">
        <title>A tissue-specific atlas of mouse protein phosphorylation and expression.</title>
        <authorList>
            <person name="Huttlin E.L."/>
            <person name="Jedrychowski M.P."/>
            <person name="Elias J.E."/>
            <person name="Goswami T."/>
            <person name="Rad R."/>
            <person name="Beausoleil S.A."/>
            <person name="Villen J."/>
            <person name="Haas W."/>
            <person name="Sowa M.E."/>
            <person name="Gygi S.P."/>
        </authorList>
    </citation>
    <scope>PHOSPHORYLATION [LARGE SCALE ANALYSIS] AT SER-34; SER-145 AND SER-263</scope>
    <scope>IDENTIFICATION BY MASS SPECTROMETRY [LARGE SCALE ANALYSIS]</scope>
    <source>
        <tissue>Brain</tissue>
        <tissue>Brown adipose tissue</tissue>
        <tissue>Heart</tissue>
        <tissue>Kidney</tissue>
        <tissue>Liver</tissue>
        <tissue>Lung</tissue>
        <tissue>Pancreas</tissue>
        <tissue>Spleen</tissue>
        <tissue>Testis</tissue>
    </source>
</reference>
<keyword id="KW-0013">ADP-ribosylation</keyword>
<keyword id="KW-0966">Cell projection</keyword>
<keyword id="KW-0175">Coiled coil</keyword>
<keyword id="KW-0963">Cytoplasm</keyword>
<keyword id="KW-0507">mRNA processing</keyword>
<keyword id="KW-0508">mRNA splicing</keyword>
<keyword id="KW-0509">mRNA transport</keyword>
<keyword id="KW-0866">Nonsense-mediated mRNA decay</keyword>
<keyword id="KW-0539">Nucleus</keyword>
<keyword id="KW-0597">Phosphoprotein</keyword>
<keyword id="KW-1185">Reference proteome</keyword>
<keyword id="KW-0694">RNA-binding</keyword>
<keyword id="KW-0747">Spliceosome</keyword>
<keyword id="KW-0346">Stress response</keyword>
<keyword id="KW-0810">Translation regulation</keyword>
<keyword id="KW-0813">Transport</keyword>
<keyword id="KW-0832">Ubl conjugation</keyword>
<dbReference type="EMBL" id="AF526276">
    <property type="protein sequence ID" value="AAM88396.1"/>
    <property type="molecule type" value="mRNA"/>
</dbReference>
<dbReference type="EMBL" id="AJ292072">
    <property type="protein sequence ID" value="CAC27775.1"/>
    <property type="molecule type" value="mRNA"/>
</dbReference>
<dbReference type="EMBL" id="AK139608">
    <property type="protein sequence ID" value="BAE24081.1"/>
    <property type="molecule type" value="mRNA"/>
</dbReference>
<dbReference type="EMBL" id="AL590963">
    <property type="status" value="NOT_ANNOTATED_CDS"/>
    <property type="molecule type" value="Genomic_DNA"/>
</dbReference>
<dbReference type="EMBL" id="CH466556">
    <property type="protein sequence ID" value="EDL16170.1"/>
    <property type="molecule type" value="Genomic_DNA"/>
</dbReference>
<dbReference type="EMBL" id="BC034533">
    <property type="protein sequence ID" value="AAH34533.1"/>
    <property type="molecule type" value="mRNA"/>
</dbReference>
<dbReference type="EMBL" id="BC060672">
    <property type="protein sequence ID" value="AAH60672.1"/>
    <property type="status" value="ALT_INIT"/>
    <property type="molecule type" value="mRNA"/>
</dbReference>
<dbReference type="EMBL" id="BC141296">
    <property type="protein sequence ID" value="AAI41297.1"/>
    <property type="molecule type" value="mRNA"/>
</dbReference>
<dbReference type="CCDS" id="CCDS36302.1"/>
<dbReference type="RefSeq" id="NP_619601.2">
    <property type="nucleotide sequence ID" value="NM_138660.2"/>
</dbReference>
<dbReference type="SMR" id="Q8K3W3"/>
<dbReference type="BioGRID" id="228651">
    <property type="interactions" value="7"/>
</dbReference>
<dbReference type="ComplexPortal" id="CPX-635">
    <property type="entry name" value="Exon junction core complex, Magoh variant"/>
</dbReference>
<dbReference type="ComplexPortal" id="CPX-683">
    <property type="entry name" value="Exon junction core complex, Magohb variant"/>
</dbReference>
<dbReference type="FunCoup" id="Q8K3W3">
    <property type="interactions" value="4323"/>
</dbReference>
<dbReference type="IntAct" id="Q8K3W3">
    <property type="interactions" value="1"/>
</dbReference>
<dbReference type="STRING" id="10090.ENSMUSP00000017384"/>
<dbReference type="GlyGen" id="Q8K3W3">
    <property type="glycosylation" value="1 site, 1 O-linked glycan (1 site)"/>
</dbReference>
<dbReference type="iPTMnet" id="Q8K3W3"/>
<dbReference type="PhosphoSitePlus" id="Q8K3W3"/>
<dbReference type="jPOST" id="Q8K3W3"/>
<dbReference type="PaxDb" id="10090-ENSMUSP00000017384"/>
<dbReference type="PeptideAtlas" id="Q8K3W3"/>
<dbReference type="ProteomicsDB" id="265533"/>
<dbReference type="Pumba" id="Q8K3W3"/>
<dbReference type="Antibodypedia" id="16438">
    <property type="antibodies" value="279 antibodies from 29 providers"/>
</dbReference>
<dbReference type="Ensembl" id="ENSMUST00000017384.14">
    <property type="protein sequence ID" value="ENSMUSP00000017384.8"/>
    <property type="gene ID" value="ENSMUSG00000078676.10"/>
</dbReference>
<dbReference type="Ensembl" id="ENSMUST00000169695.2">
    <property type="protein sequence ID" value="ENSMUSP00000130926.2"/>
    <property type="gene ID" value="ENSMUSG00000078676.10"/>
</dbReference>
<dbReference type="GeneID" id="192160"/>
<dbReference type="KEGG" id="mmu:192160"/>
<dbReference type="UCSC" id="uc007lhq.1">
    <property type="organism name" value="mouse"/>
</dbReference>
<dbReference type="AGR" id="MGI:2179723"/>
<dbReference type="CTD" id="22794"/>
<dbReference type="MGI" id="MGI:2179723">
    <property type="gene designation" value="Casc3"/>
</dbReference>
<dbReference type="VEuPathDB" id="HostDB:ENSMUSG00000078676"/>
<dbReference type="eggNOG" id="KOG4264">
    <property type="taxonomic scope" value="Eukaryota"/>
</dbReference>
<dbReference type="GeneTree" id="ENSGT00390000006930"/>
<dbReference type="HOGENOM" id="CLU_018976_0_0_1"/>
<dbReference type="InParanoid" id="Q8K3W3"/>
<dbReference type="OMA" id="NRMEEMS"/>
<dbReference type="OrthoDB" id="657902at2759"/>
<dbReference type="PhylomeDB" id="Q8K3W3"/>
<dbReference type="TreeFam" id="TF329663"/>
<dbReference type="Reactome" id="R-MMU-159236">
    <property type="pathway name" value="Transport of Mature mRNA derived from an Intron-Containing Transcript"/>
</dbReference>
<dbReference type="Reactome" id="R-MMU-72163">
    <property type="pathway name" value="mRNA Splicing - Major Pathway"/>
</dbReference>
<dbReference type="Reactome" id="R-MMU-72187">
    <property type="pathway name" value="mRNA 3'-end processing"/>
</dbReference>
<dbReference type="Reactome" id="R-MMU-73856">
    <property type="pathway name" value="RNA Polymerase II Transcription Termination"/>
</dbReference>
<dbReference type="Reactome" id="R-MMU-975957">
    <property type="pathway name" value="Nonsense Mediated Decay (NMD) enhanced by the Exon Junction Complex (EJC)"/>
</dbReference>
<dbReference type="BioGRID-ORCS" id="192160">
    <property type="hits" value="12 hits in 79 CRISPR screens"/>
</dbReference>
<dbReference type="CD-CODE" id="DE1E139C">
    <property type="entry name" value="Chromatoid body"/>
</dbReference>
<dbReference type="ChiTaRS" id="Casc3">
    <property type="organism name" value="mouse"/>
</dbReference>
<dbReference type="PRO" id="PR:Q8K3W3"/>
<dbReference type="Proteomes" id="UP000000589">
    <property type="component" value="Chromosome 11"/>
</dbReference>
<dbReference type="RNAct" id="Q8K3W3">
    <property type="molecule type" value="protein"/>
</dbReference>
<dbReference type="Bgee" id="ENSMUSG00000078676">
    <property type="expression patterns" value="Expressed in embryonic post-anal tail and 245 other cell types or tissues"/>
</dbReference>
<dbReference type="GO" id="GO:0005737">
    <property type="term" value="C:cytoplasm"/>
    <property type="evidence" value="ECO:0000314"/>
    <property type="project" value="MGI"/>
</dbReference>
<dbReference type="GO" id="GO:0010494">
    <property type="term" value="C:cytoplasmic stress granule"/>
    <property type="evidence" value="ECO:0007669"/>
    <property type="project" value="UniProtKB-SubCell"/>
</dbReference>
<dbReference type="GO" id="GO:0030425">
    <property type="term" value="C:dendrite"/>
    <property type="evidence" value="ECO:0007669"/>
    <property type="project" value="UniProtKB-SubCell"/>
</dbReference>
<dbReference type="GO" id="GO:0035145">
    <property type="term" value="C:exon-exon junction complex"/>
    <property type="evidence" value="ECO:0000266"/>
    <property type="project" value="ComplexPortal"/>
</dbReference>
<dbReference type="GO" id="GO:0031965">
    <property type="term" value="C:nuclear membrane"/>
    <property type="evidence" value="ECO:0007669"/>
    <property type="project" value="Ensembl"/>
</dbReference>
<dbReference type="GO" id="GO:0016607">
    <property type="term" value="C:nuclear speck"/>
    <property type="evidence" value="ECO:0007669"/>
    <property type="project" value="UniProtKB-SubCell"/>
</dbReference>
<dbReference type="GO" id="GO:0005634">
    <property type="term" value="C:nucleus"/>
    <property type="evidence" value="ECO:0000314"/>
    <property type="project" value="MGI"/>
</dbReference>
<dbReference type="GO" id="GO:0048471">
    <property type="term" value="C:perinuclear region of cytoplasm"/>
    <property type="evidence" value="ECO:0007669"/>
    <property type="project" value="UniProtKB-SubCell"/>
</dbReference>
<dbReference type="GO" id="GO:1990904">
    <property type="term" value="C:ribonucleoprotein complex"/>
    <property type="evidence" value="ECO:0000314"/>
    <property type="project" value="MGI"/>
</dbReference>
<dbReference type="GO" id="GO:0071006">
    <property type="term" value="C:U2-type catalytic step 1 spliceosome"/>
    <property type="evidence" value="ECO:0000250"/>
    <property type="project" value="UniProtKB"/>
</dbReference>
<dbReference type="GO" id="GO:0042802">
    <property type="term" value="F:identical protein binding"/>
    <property type="evidence" value="ECO:0000266"/>
    <property type="project" value="MGI"/>
</dbReference>
<dbReference type="GO" id="GO:0003729">
    <property type="term" value="F:mRNA binding"/>
    <property type="evidence" value="ECO:0007669"/>
    <property type="project" value="InterPro"/>
</dbReference>
<dbReference type="GO" id="GO:0031625">
    <property type="term" value="F:ubiquitin protein ligase binding"/>
    <property type="evidence" value="ECO:0007669"/>
    <property type="project" value="Ensembl"/>
</dbReference>
<dbReference type="GO" id="GO:0008298">
    <property type="term" value="P:intracellular mRNA localization"/>
    <property type="evidence" value="ECO:0000314"/>
    <property type="project" value="MGI"/>
</dbReference>
<dbReference type="GO" id="GO:0006406">
    <property type="term" value="P:mRNA export from nucleus"/>
    <property type="evidence" value="ECO:0000303"/>
    <property type="project" value="ComplexPortal"/>
</dbReference>
<dbReference type="GO" id="GO:0000398">
    <property type="term" value="P:mRNA splicing, via spliceosome"/>
    <property type="evidence" value="ECO:0000250"/>
    <property type="project" value="UniProtKB"/>
</dbReference>
<dbReference type="GO" id="GO:0000184">
    <property type="term" value="P:nuclear-transcribed mRNA catabolic process, nonsense-mediated decay"/>
    <property type="evidence" value="ECO:0007669"/>
    <property type="project" value="UniProtKB-KW"/>
</dbReference>
<dbReference type="GO" id="GO:2000622">
    <property type="term" value="P:regulation of nuclear-transcribed mRNA catabolic process, nonsense-mediated decay"/>
    <property type="evidence" value="ECO:0000266"/>
    <property type="project" value="ComplexPortal"/>
</dbReference>
<dbReference type="GO" id="GO:0006417">
    <property type="term" value="P:regulation of translation"/>
    <property type="evidence" value="ECO:0007669"/>
    <property type="project" value="UniProtKB-KW"/>
</dbReference>
<dbReference type="InterPro" id="IPR018545">
    <property type="entry name" value="Btz_dom"/>
</dbReference>
<dbReference type="InterPro" id="IPR028544">
    <property type="entry name" value="CASC3"/>
</dbReference>
<dbReference type="PANTHER" id="PTHR13434">
    <property type="entry name" value="PROTEIN CASC3"/>
    <property type="match status" value="1"/>
</dbReference>
<dbReference type="PANTHER" id="PTHR13434:SF0">
    <property type="entry name" value="PROTEIN CASC3"/>
    <property type="match status" value="1"/>
</dbReference>
<dbReference type="Pfam" id="PF09405">
    <property type="entry name" value="Btz"/>
    <property type="match status" value="1"/>
</dbReference>
<dbReference type="SMART" id="SM01044">
    <property type="entry name" value="Btz"/>
    <property type="match status" value="1"/>
</dbReference>
<comment type="function">
    <text evidence="2">Required for pre-mRNA splicing as component of the spliceosome. Core component of the splicing-dependent multiprotein exon junction complex (EJC) deposited at splice junctions on mRNAs. The EJC is a dynamic structure consisting of core proteins and several peripheral nuclear and cytoplasmic associated factors that join the complex only transiently either during EJC assembly or during subsequent mRNA metabolism. The EJC marks the position of the exon-exon junction in the mature mRNA for the gene expression machinery and the core components remain bound to spliced mRNAs throughout all stages of mRNA metabolism thereby influencing downstream processes including nuclear mRNA export, subcellular mRNA localization, translation efficiency and nonsense-mediated mRNA decay (NMD). Stimulates the ATPase and RNA-helicase activities of EIF4A3. Plays a role in the stress response by participating in cytoplasmic stress granules assembly and by favoring cell recovery following stress. Component of the dendritic ribonucleoprotein particles (RNPs) in hippocampal neurons. May play a role in mRNA transport. Binds spliced mRNA in sequence-independent manner, 20-24 nucleotides upstream of mRNA exon-exon junctions. Binds poly(G) and poly(U) RNA homomer.</text>
</comment>
<comment type="subunit">
    <text evidence="2 3 6">Identified in the spliceosome C complex. Component of the mRNA splicing-dependent exon junction complex (EJC), which contains at least CASC3, EIF4A3, MAGOH, NXF1 and RBM8A/Y14. Identified in a complex composed of the EJC core, UPF3B and UPF2. The EJC core can also interact with UPF3A (in vitro) (By similarity). Forms homooligomers (By similarity). Interacts with STAU in an RNA-dependent manner (PubMed:12843282). Interacts with DHX34; the interaction is RNA-independent (By similarity).</text>
</comment>
<comment type="subcellular location">
    <subcellularLocation>
        <location evidence="6">Cytoplasm</location>
    </subcellularLocation>
    <subcellularLocation>
        <location evidence="6">Cytoplasm</location>
        <location evidence="6">Perinuclear region</location>
    </subcellularLocation>
    <subcellularLocation>
        <location evidence="6">Nucleus</location>
    </subcellularLocation>
    <subcellularLocation>
        <location evidence="2">Nucleus speckle</location>
    </subcellularLocation>
    <subcellularLocation>
        <location evidence="2">Cytoplasm</location>
        <location evidence="2">Stress granule</location>
    </subcellularLocation>
    <subcellularLocation>
        <location evidence="6">Cytoplasm</location>
        <location evidence="6">Cytoplasmic ribonucleoprotein granule</location>
    </subcellularLocation>
    <subcellularLocation>
        <location evidence="6">Cell projection</location>
        <location evidence="6">Dendrite</location>
    </subcellularLocation>
    <text evidence="2 6 9">Shuttles between the nucleus and the cytoplasm in a XPO1/CRM1-dependent manner (PubMed:12843282). Transported to the cytoplasm as part of the exon junction complex (EJC) bound to mRNA. In nuclear speckles, colocalizes with MAGOH. Under stress conditions, colocalizes with FMR1 and TIA1, but not MAGOH and RBM8A EJC core factors, in cytoplasmic stress granules (By similarity). In the dendrites of hippocampal neurons, localizes to dendritic ribonucleoprotein granules (Probable).</text>
</comment>
<comment type="tissue specificity">
    <text evidence="6">High levels in heart, brain, including hippocampus and cerebellum, liver, kidney and testis; lower levels in muscle, lung and spleen.</text>
</comment>
<comment type="domain">
    <text evidence="1">The coiled coil domain may be involved in oligomerization.</text>
</comment>
<comment type="PTM">
    <text evidence="1">ADP-ribosylated by tankyrase TNKS and TNKS2. Poly-ADP-ribosylated protein is recognized by RNF146, followed by ubiquitination (By similarity).</text>
</comment>
<comment type="PTM">
    <text evidence="1">Ubiquitinated by RNF146 when poly-ADP-ribosylated, leading to its degradation.</text>
</comment>
<comment type="similarity">
    <text evidence="8">Belongs to the CASC3 family.</text>
</comment>
<comment type="sequence caution" evidence="8">
    <conflict type="erroneous initiation">
        <sequence resource="EMBL-CDS" id="AAH60672"/>
    </conflict>
</comment>
<sequence length="698" mass="75770">MADRRRQRASQDTEDEESGASGSDSGSPARGGGSCSGSVGGGGSGSLPSQRGGRGGGLHLRRVESGGAKSAEESECESEDGMEGDAVLSDYESAEDSEGEEDYSEEENSKVELKSEANDAADSSAKEKGEEKPESKGTVTGERQSGDGQESTEPVENKVGKKGPKHLDDDEDRKNPAYIPRKGLFFEHDLRGQTQEEEVRPKGRQRKLWKDEGRWEHDKFREDEQAPKSRQELIALYGYDIRSAHNPDDIKPRRIRKPRFGSSPQRDPNWIGDRSSKSHRHQGPGGNLPPRTFINRNTAGTGRMSASRNYSRSGGFKDGRTSFRPVEVAGQHGGRSAETLKHEASYRSRRLEQTPVRDPSPEPDAPLLGSPEKEEVASETPAAVPDITPPAPDRPIEKKSYSRARRTRTKVGDAVKAAEEVPPPSEGLASTATVPETTPAAKTGNWEAPVDSTTGGLEQDVAQLNIAEQSWSPSQPSFLQPRELRGVPNHIHMGAGPPPQFNRMEEMGVQSGRAKRYSSQRQRPVPEPPAPPVHISIMEGHYYDPLQFQGPIYTHGDSPAPLPPQGMIVQPEMHLPHPGLHPHQSPGPLPNPGLYPPPVSMSPGQPPPQQLLAPTYFSAPGVMNFGNPNYPYAPGALPPPPPPHLYPNTQAPPQVYGGVTYYNPAQQQVQPKPSPPRRTPQPVSIKPPPPEVVSRGSS</sequence>
<name>CASC3_MOUSE</name>